<reference key="1">
    <citation type="journal article" date="2011" name="Nature">
        <title>A high-resolution map of human evolutionary constraint using 29 mammals.</title>
        <authorList>
            <person name="Lindblad-Toh K."/>
            <person name="Garber M."/>
            <person name="Zuk O."/>
            <person name="Lin M.F."/>
            <person name="Parker B.J."/>
            <person name="Washietl S."/>
            <person name="Kheradpour P."/>
            <person name="Ernst J."/>
            <person name="Jordan G."/>
            <person name="Mauceli E."/>
            <person name="Ward L.D."/>
            <person name="Lowe C.B."/>
            <person name="Holloway A.K."/>
            <person name="Clamp M."/>
            <person name="Gnerre S."/>
            <person name="Alfoldi J."/>
            <person name="Beal K."/>
            <person name="Chang J."/>
            <person name="Clawson H."/>
            <person name="Cuff J."/>
            <person name="Di Palma F."/>
            <person name="Fitzgerald S."/>
            <person name="Flicek P."/>
            <person name="Guttman M."/>
            <person name="Hubisz M.J."/>
            <person name="Jaffe D.B."/>
            <person name="Jungreis I."/>
            <person name="Kent W.J."/>
            <person name="Kostka D."/>
            <person name="Lara M."/>
            <person name="Martins A.L."/>
            <person name="Massingham T."/>
            <person name="Moltke I."/>
            <person name="Raney B.J."/>
            <person name="Rasmussen M.D."/>
            <person name="Robinson J."/>
            <person name="Stark A."/>
            <person name="Vilella A.J."/>
            <person name="Wen J."/>
            <person name="Xie X."/>
            <person name="Zody M.C."/>
            <person name="Baldwin J."/>
            <person name="Bloom T."/>
            <person name="Chin C.W."/>
            <person name="Heiman D."/>
            <person name="Nicol R."/>
            <person name="Nusbaum C."/>
            <person name="Young S."/>
            <person name="Wilkinson J."/>
            <person name="Worley K.C."/>
            <person name="Kovar C.L."/>
            <person name="Muzny D.M."/>
            <person name="Gibbs R.A."/>
            <person name="Cree A."/>
            <person name="Dihn H.H."/>
            <person name="Fowler G."/>
            <person name="Jhangiani S."/>
            <person name="Joshi V."/>
            <person name="Lee S."/>
            <person name="Lewis L.R."/>
            <person name="Nazareth L.V."/>
            <person name="Okwuonu G."/>
            <person name="Santibanez J."/>
            <person name="Warren W.C."/>
            <person name="Mardis E.R."/>
            <person name="Weinstock G.M."/>
            <person name="Wilson R.K."/>
            <person name="Delehaunty K."/>
            <person name="Dooling D."/>
            <person name="Fronik C."/>
            <person name="Fulton L."/>
            <person name="Fulton B."/>
            <person name="Graves T."/>
            <person name="Minx P."/>
            <person name="Sodergren E."/>
            <person name="Birney E."/>
            <person name="Margulies E.H."/>
            <person name="Herrero J."/>
            <person name="Green E.D."/>
            <person name="Haussler D."/>
            <person name="Siepel A."/>
            <person name="Goldman N."/>
            <person name="Pollard K.S."/>
            <person name="Pedersen J.S."/>
            <person name="Lander E.S."/>
            <person name="Kellis M."/>
        </authorList>
    </citation>
    <scope>NUCLEOTIDE SEQUENCE [LARGE SCALE GENOMIC DNA]</scope>
    <source>
        <strain>Thorbecke</strain>
    </source>
</reference>
<reference evidence="22 23" key="2">
    <citation type="journal article" date="2013" name="Nature">
        <title>The initiation of mammalian protein synthesis and mRNA scanning mechanism.</title>
        <authorList>
            <person name="Lomakin I.B."/>
            <person name="Steitz T.A."/>
        </authorList>
    </citation>
    <scope>X-RAY CRYSTALLOGRAPHY (7.01 ANGSTROMS) OF 40S RIBOSOME</scope>
    <scope>FUNCTION</scope>
    <scope>SUBUNIT</scope>
    <scope>SUBCELLULAR LOCATION</scope>
</reference>
<reference evidence="20 21" key="3">
    <citation type="journal article" date="2015" name="Mol. Cell">
        <title>Cryo-EM of ribosomal 80S complexes with termination factors reveals the translocated cricket paralysis virus IRES.</title>
        <authorList>
            <person name="Muhs M."/>
            <person name="Hilal T."/>
            <person name="Mielke T."/>
            <person name="Skabkin M.A."/>
            <person name="Sanbonmatsu K.Y."/>
            <person name="Pestova T.V."/>
            <person name="Spahn C.M."/>
        </authorList>
    </citation>
    <scope>STRUCTURE BY ELECTRON MICROSCOPY (9.00 ANGSTROMS) OF RIBOSOME</scope>
    <scope>FUNCTION</scope>
    <scope>SUBUNIT</scope>
    <scope>SUBCELLULAR LOCATION</scope>
</reference>
<reference evidence="18 19" key="4">
    <citation type="journal article" date="2015" name="Nature">
        <title>Structural basis for stop codon recognition in eukaryotes.</title>
        <authorList>
            <person name="Brown A."/>
            <person name="Shao S."/>
            <person name="Murray J."/>
            <person name="Hegde R.S."/>
            <person name="Ramakrishnan V."/>
        </authorList>
    </citation>
    <scope>STRUCTURE BY ELECTRON MICROSCOPY (3.45 ANGSTROMS) OF 2-207 OF RIBOSOME</scope>
    <scope>FUNCTION</scope>
    <scope>SUBCELLULAR LOCATION</scope>
    <scope>SUBUNIT</scope>
</reference>
<reference evidence="24 25" key="5">
    <citation type="journal article" date="2016" name="Cell">
        <title>Decoding mammalian ribosome-mRNA states by translational GTPase complexes.</title>
        <authorList>
            <person name="Shao S."/>
            <person name="Murray J."/>
            <person name="Brown A."/>
            <person name="Taunton J."/>
            <person name="Ramakrishnan V."/>
            <person name="Hegde R.S."/>
        </authorList>
    </citation>
    <scope>STRUCTURE BY ELECTRON MICROSCOPY (3.31 ANGSTROMS) OF RIBOSOME</scope>
    <scope>FUNCTION</scope>
    <scope>SUBCELLULAR LOCATION</scope>
    <scope>SUBUNIT</scope>
</reference>
<reference evidence="26 27" key="6">
    <citation type="journal article" date="2018" name="Elife">
        <title>Dual tRNA mimicry in the Cricket paralysis virus IRES uncovers an unexpected similarity with the Hepatitis C Virus IRES.</title>
        <authorList>
            <person name="Pisareva V.P."/>
            <person name="Pisarev A.V."/>
            <person name="Fernandez I.S."/>
        </authorList>
    </citation>
    <scope>STRUCTURE BY ELECTRON MICROSCOPY (3.20 ANGSTROMS) OF RIBOSOME</scope>
    <scope>SUBCELLULAR LOCATION</scope>
    <scope>SUBUNIT</scope>
</reference>
<reference evidence="30 31" key="7">
    <citation type="journal article" date="2019" name="Elife">
        <title>Structural and mutational analysis of the ribosome-arresting human XBP1u.</title>
        <authorList>
            <person name="Shanmuganathan V."/>
            <person name="Schiller N."/>
            <person name="Magoulopoulou A."/>
            <person name="Cheng J."/>
            <person name="Braunger K."/>
            <person name="Cymer F."/>
            <person name="Berninghausen O."/>
            <person name="Beatrix B."/>
            <person name="Kohno K."/>
            <person name="von Heijne G."/>
            <person name="Beckmann R."/>
        </authorList>
    </citation>
    <scope>STRUCTURE BY ELECTRON MICROSCOPY (3.00 ANGSTROMS) OF 2-207 OF RIBOSOME</scope>
    <scope>SUBCELLULAR LOCATION</scope>
    <scope>SUBUNIT</scope>
</reference>
<reference evidence="28 29" key="8">
    <citation type="journal article" date="2019" name="EMBO J.">
        <title>The Israeli acute paralysis virus IRES captures host ribosomes by mimicking a ribosomal state with hybrid tRNAs.</title>
        <authorList>
            <person name="Acosta-Reyes F."/>
            <person name="Neupane R."/>
            <person name="Frank J."/>
            <person name="Fernandez I.S."/>
        </authorList>
    </citation>
    <scope>STRUCTURE BY ELECTRON MICROSCOPY (3.10 ANGSTROMS) OF RIBOSOME</scope>
    <scope>SUBUNIT</scope>
    <scope>SUBCELLULAR LOCATION</scope>
</reference>
<reference evidence="32" key="9">
    <citation type="journal article" date="2019" name="Nat. Struct. Mol. Biol.">
        <title>Mechanism of ribosome stalling during translation of a poly(A) tail.</title>
        <authorList>
            <person name="Chandrasekaran V."/>
            <person name="Juszkiewicz S."/>
            <person name="Choi J."/>
            <person name="Puglisi J.D."/>
            <person name="Brown A."/>
            <person name="Shao S."/>
            <person name="Ramakrishnan V."/>
            <person name="Hegde R.S."/>
        </authorList>
    </citation>
    <scope>STRUCTURE BY ELECTRON MICROSCOPY (2.80 ANGSTROMS) OF RIBOSOME</scope>
    <scope>SUBCELLULAR LOCATION</scope>
    <scope>SUBUNIT</scope>
</reference>
<reference evidence="35 36" key="10">
    <citation type="journal article" date="2020" name="Cell Rep.">
        <title>The Halastavi arva virus intergenic region IRES promotes translation by the simplest possible initiation mechanism.</title>
        <authorList>
            <person name="Abaeva I.S."/>
            <person name="Vicens Q."/>
            <person name="Bochler A."/>
            <person name="Soufari H."/>
            <person name="Simonetti A."/>
            <person name="Pestova T.V."/>
            <person name="Hashem Y."/>
            <person name="Hellen C.U.T."/>
        </authorList>
    </citation>
    <scope>STRUCTURE BY ELECTRON MICROSCOPY (3.49 ANGSTROMS) OF RIBOSOME</scope>
    <scope>SUBCELLULAR LOCATION</scope>
    <scope>SUBUNIT</scope>
</reference>
<reference evidence="33 34" key="11">
    <citation type="journal article" date="2020" name="Elife">
        <title>A complex IRES at the 5'-UTR of a viral mRNA assembles a functional 48S complex via an uAUG intermediate.</title>
        <authorList>
            <person name="Neupane R."/>
            <person name="Pisareva V.P."/>
            <person name="Rodriguez C.F."/>
            <person name="Pisarev A.V."/>
            <person name="Fernandez I.S."/>
        </authorList>
    </citation>
    <scope>STRUCTURE BY ELECTRON MICROSCOPY (3.00 ANGSTROMS) OF RIBOSOME</scope>
    <scope>SUBUNIT</scope>
    <scope>SUBCELLULAR LOCATION</scope>
</reference>
<reference evidence="38 39" key="12">
    <citation type="journal article" date="2022" name="EMBO J.">
        <title>Molecular architecture of 40S translation initiation complexes on the hepatitis C virus IRES.</title>
        <authorList>
            <person name="Brown Z.P."/>
            <person name="Abaeva I.S."/>
            <person name="De S."/>
            <person name="Hellen C.U.T."/>
            <person name="Pestova T.V."/>
            <person name="Frank J."/>
        </authorList>
    </citation>
    <scope>STRUCTURE BY ELECTRON MICROSCOPY (3.50 ANGSTROMS) OF RIBOSOME</scope>
    <scope>SUBCELLULAR LOCATION</scope>
    <scope>SUBUNIT</scope>
</reference>
<reference evidence="40 41" key="13">
    <citation type="journal article" date="2022" name="Mol. Cell">
        <title>Direct epitranscriptomic regulation of mammalian translation initiation through N4-acetylcytidine.</title>
        <authorList>
            <person name="Arango D."/>
            <person name="Sturgill D."/>
            <person name="Yang R."/>
            <person name="Kanai T."/>
            <person name="Bauer P."/>
            <person name="Roy J."/>
            <person name="Wang Z."/>
            <person name="Hosogane M."/>
            <person name="Schiffers S."/>
            <person name="Oberdoerffer S."/>
        </authorList>
    </citation>
    <scope>STRUCTURE BY ELECTRON MICROSCOPY (2.80 ANGSTROMS) OF RIBOSOME</scope>
    <scope>SUBCELLULAR LOCATION</scope>
    <scope>SUBUNIT</scope>
</reference>
<reference evidence="37" key="14">
    <citation type="journal article" date="2023" name="Nature">
        <title>A molecular network of conserved factors keeps ribosomes dormant in the egg.</title>
        <authorList>
            <person name="Leesch F."/>
            <person name="Lorenzo-Orts L."/>
            <person name="Pribitzer C."/>
            <person name="Grishkovskaya I."/>
            <person name="Roehsner J."/>
            <person name="Chugunova A."/>
            <person name="Matzinger M."/>
            <person name="Roitinger E."/>
            <person name="Belacic K."/>
            <person name="Kandolf S."/>
            <person name="Lin T.Y."/>
            <person name="Mechtler K."/>
            <person name="Meinhart A."/>
            <person name="Haselbach D."/>
            <person name="Pauli A."/>
        </authorList>
    </citation>
    <scope>STRUCTURE BY ELECTRON MICROSCOPY (2.30 ANGSTROMS) OF RIBOSOME</scope>
    <scope>SUBCELLULAR LOCATION</scope>
    <scope>SUBUNIT</scope>
</reference>
<dbReference type="EMBL" id="AAGW02009607">
    <property type="status" value="NOT_ANNOTATED_CDS"/>
    <property type="molecule type" value="Genomic_DNA"/>
</dbReference>
<dbReference type="RefSeq" id="XP_002708870.1">
    <property type="nucleotide sequence ID" value="XM_002708824.3"/>
</dbReference>
<dbReference type="PDB" id="3JAG">
    <property type="method" value="EM"/>
    <property type="resolution" value="3.65 A"/>
    <property type="chains" value="II=2-207"/>
</dbReference>
<dbReference type="PDB" id="3JAH">
    <property type="method" value="EM"/>
    <property type="resolution" value="3.45 A"/>
    <property type="chains" value="II=2-207"/>
</dbReference>
<dbReference type="PDB" id="3JAI">
    <property type="method" value="EM"/>
    <property type="resolution" value="3.65 A"/>
    <property type="chains" value="II=2-207"/>
</dbReference>
<dbReference type="PDB" id="4D5L">
    <property type="method" value="EM"/>
    <property type="resolution" value="9.00 A"/>
    <property type="chains" value="I=1-208"/>
</dbReference>
<dbReference type="PDB" id="4D61">
    <property type="method" value="EM"/>
    <property type="resolution" value="9.00 A"/>
    <property type="chains" value="I=1-208"/>
</dbReference>
<dbReference type="PDB" id="4KZX">
    <property type="method" value="X-ray"/>
    <property type="resolution" value="7.81 A"/>
    <property type="chains" value="I=1-208"/>
</dbReference>
<dbReference type="PDB" id="4KZY">
    <property type="method" value="X-ray"/>
    <property type="resolution" value="7.01 A"/>
    <property type="chains" value="I=1-208"/>
</dbReference>
<dbReference type="PDB" id="4KZZ">
    <property type="method" value="X-ray"/>
    <property type="resolution" value="7.03 A"/>
    <property type="chains" value="I=1-208"/>
</dbReference>
<dbReference type="PDB" id="5K0Y">
    <property type="method" value="EM"/>
    <property type="resolution" value="5.80 A"/>
    <property type="chains" value="o=2-207"/>
</dbReference>
<dbReference type="PDB" id="5LZS">
    <property type="method" value="EM"/>
    <property type="resolution" value="3.31 A"/>
    <property type="chains" value="II=1-208"/>
</dbReference>
<dbReference type="PDB" id="5LZT">
    <property type="method" value="EM"/>
    <property type="resolution" value="3.65 A"/>
    <property type="chains" value="II=1-208"/>
</dbReference>
<dbReference type="PDB" id="5LZU">
    <property type="method" value="EM"/>
    <property type="resolution" value="3.75 A"/>
    <property type="chains" value="II=1-208"/>
</dbReference>
<dbReference type="PDB" id="5LZV">
    <property type="method" value="EM"/>
    <property type="resolution" value="3.35 A"/>
    <property type="chains" value="II=1-208"/>
</dbReference>
<dbReference type="PDB" id="5LZW">
    <property type="method" value="EM"/>
    <property type="resolution" value="3.53 A"/>
    <property type="chains" value="II=1-208"/>
</dbReference>
<dbReference type="PDB" id="5LZZ">
    <property type="method" value="EM"/>
    <property type="resolution" value="3.47 A"/>
    <property type="chains" value="II=1-208"/>
</dbReference>
<dbReference type="PDB" id="6D90">
    <property type="method" value="EM"/>
    <property type="resolution" value="3.20 A"/>
    <property type="chains" value="JJ=1-208"/>
</dbReference>
<dbReference type="PDB" id="6D9J">
    <property type="method" value="EM"/>
    <property type="resolution" value="3.20 A"/>
    <property type="chains" value="JJ=2-207"/>
</dbReference>
<dbReference type="PDB" id="6P4G">
    <property type="method" value="EM"/>
    <property type="resolution" value="3.10 A"/>
    <property type="chains" value="J=1-208"/>
</dbReference>
<dbReference type="PDB" id="6P4H">
    <property type="method" value="EM"/>
    <property type="resolution" value="3.20 A"/>
    <property type="chains" value="J=1-207"/>
</dbReference>
<dbReference type="PDB" id="6R5Q">
    <property type="method" value="EM"/>
    <property type="resolution" value="3.00 A"/>
    <property type="chains" value="CC=2-207"/>
</dbReference>
<dbReference type="PDB" id="6R6G">
    <property type="method" value="EM"/>
    <property type="resolution" value="3.70 A"/>
    <property type="chains" value="CC=2-207"/>
</dbReference>
<dbReference type="PDB" id="6R6P">
    <property type="method" value="EM"/>
    <property type="resolution" value="3.10 A"/>
    <property type="chains" value="CC=2-207"/>
</dbReference>
<dbReference type="PDB" id="6R7Q">
    <property type="method" value="EM"/>
    <property type="resolution" value="3.90 A"/>
    <property type="chains" value="CC=2-207"/>
</dbReference>
<dbReference type="PDB" id="6SGC">
    <property type="method" value="EM"/>
    <property type="resolution" value="2.80 A"/>
    <property type="chains" value="J1=1-208"/>
</dbReference>
<dbReference type="PDB" id="6W2S">
    <property type="method" value="EM"/>
    <property type="resolution" value="3.00 A"/>
    <property type="chains" value="J=1-208"/>
</dbReference>
<dbReference type="PDB" id="6W2T">
    <property type="method" value="EM"/>
    <property type="resolution" value="3.36 A"/>
    <property type="chains" value="J=1-208"/>
</dbReference>
<dbReference type="PDB" id="6YAL">
    <property type="method" value="EM"/>
    <property type="resolution" value="3.00 A"/>
    <property type="chains" value="K=2-207"/>
</dbReference>
<dbReference type="PDB" id="6YAM">
    <property type="method" value="EM"/>
    <property type="resolution" value="3.60 A"/>
    <property type="chains" value="K=2-207"/>
</dbReference>
<dbReference type="PDB" id="6YAN">
    <property type="method" value="EM"/>
    <property type="resolution" value="3.48 A"/>
    <property type="chains" value="K=2-207"/>
</dbReference>
<dbReference type="PDB" id="6ZVK">
    <property type="method" value="EM"/>
    <property type="resolution" value="3.49 A"/>
    <property type="chains" value="c3=2-207"/>
</dbReference>
<dbReference type="PDB" id="7A01">
    <property type="method" value="EM"/>
    <property type="resolution" value="3.60 A"/>
    <property type="chains" value="c3=2-207"/>
</dbReference>
<dbReference type="PDB" id="7JQB">
    <property type="method" value="EM"/>
    <property type="resolution" value="2.70 A"/>
    <property type="chains" value="J=1-208"/>
</dbReference>
<dbReference type="PDB" id="7JQC">
    <property type="method" value="EM"/>
    <property type="resolution" value="3.30 A"/>
    <property type="chains" value="J=1-208"/>
</dbReference>
<dbReference type="PDB" id="7MDZ">
    <property type="method" value="EM"/>
    <property type="resolution" value="3.20 A"/>
    <property type="chains" value="II=1-208"/>
</dbReference>
<dbReference type="PDB" id="7NWG">
    <property type="method" value="EM"/>
    <property type="resolution" value="3.80 A"/>
    <property type="chains" value="J2=2-207"/>
</dbReference>
<dbReference type="PDB" id="7NWI">
    <property type="method" value="EM"/>
    <property type="resolution" value="3.13 A"/>
    <property type="chains" value="II=2-207"/>
</dbReference>
<dbReference type="PDB" id="7O7Y">
    <property type="method" value="EM"/>
    <property type="resolution" value="2.20 A"/>
    <property type="chains" value="Ah=1-208"/>
</dbReference>
<dbReference type="PDB" id="7O7Z">
    <property type="method" value="EM"/>
    <property type="resolution" value="2.40 A"/>
    <property type="chains" value="Ah=1-208"/>
</dbReference>
<dbReference type="PDB" id="7O80">
    <property type="method" value="EM"/>
    <property type="resolution" value="2.90 A"/>
    <property type="chains" value="Ah=1-208"/>
</dbReference>
<dbReference type="PDB" id="7O81">
    <property type="method" value="EM"/>
    <property type="resolution" value="3.10 A"/>
    <property type="chains" value="Ah=1-208"/>
</dbReference>
<dbReference type="PDB" id="7OYD">
    <property type="method" value="EM"/>
    <property type="resolution" value="2.30 A"/>
    <property type="chains" value="II=1-208"/>
</dbReference>
<dbReference type="PDB" id="7SYG">
    <property type="method" value="EM"/>
    <property type="resolution" value="4.30 A"/>
    <property type="chains" value="J=1-208"/>
</dbReference>
<dbReference type="PDB" id="7SYH">
    <property type="method" value="EM"/>
    <property type="resolution" value="4.60 A"/>
    <property type="chains" value="J=1-208"/>
</dbReference>
<dbReference type="PDB" id="7SYI">
    <property type="method" value="EM"/>
    <property type="resolution" value="4.50 A"/>
    <property type="chains" value="J=1-208"/>
</dbReference>
<dbReference type="PDB" id="7SYJ">
    <property type="method" value="EM"/>
    <property type="resolution" value="4.80 A"/>
    <property type="chains" value="J=1-208"/>
</dbReference>
<dbReference type="PDB" id="7SYK">
    <property type="method" value="EM"/>
    <property type="resolution" value="4.20 A"/>
    <property type="chains" value="J=1-208"/>
</dbReference>
<dbReference type="PDB" id="7SYL">
    <property type="method" value="EM"/>
    <property type="resolution" value="4.50 A"/>
    <property type="chains" value="J=1-208"/>
</dbReference>
<dbReference type="PDB" id="7SYM">
    <property type="method" value="EM"/>
    <property type="resolution" value="4.80 A"/>
    <property type="chains" value="J=1-208"/>
</dbReference>
<dbReference type="PDB" id="7SYN">
    <property type="method" value="EM"/>
    <property type="resolution" value="4.00 A"/>
    <property type="chains" value="J=1-208"/>
</dbReference>
<dbReference type="PDB" id="7SYO">
    <property type="method" value="EM"/>
    <property type="resolution" value="4.60 A"/>
    <property type="chains" value="J=1-208"/>
</dbReference>
<dbReference type="PDB" id="7SYP">
    <property type="method" value="EM"/>
    <property type="resolution" value="4.00 A"/>
    <property type="chains" value="J=1-208"/>
</dbReference>
<dbReference type="PDB" id="7SYQ">
    <property type="method" value="EM"/>
    <property type="resolution" value="3.80 A"/>
    <property type="chains" value="J=1-208"/>
</dbReference>
<dbReference type="PDB" id="7SYR">
    <property type="method" value="EM"/>
    <property type="resolution" value="3.60 A"/>
    <property type="chains" value="J=1-208"/>
</dbReference>
<dbReference type="PDB" id="7SYS">
    <property type="method" value="EM"/>
    <property type="resolution" value="3.50 A"/>
    <property type="chains" value="J=1-208"/>
</dbReference>
<dbReference type="PDB" id="7SYT">
    <property type="method" value="EM"/>
    <property type="resolution" value="4.40 A"/>
    <property type="chains" value="J=1-208"/>
</dbReference>
<dbReference type="PDB" id="7SYU">
    <property type="method" value="EM"/>
    <property type="resolution" value="4.60 A"/>
    <property type="chains" value="J=1-208"/>
</dbReference>
<dbReference type="PDB" id="7SYV">
    <property type="method" value="EM"/>
    <property type="resolution" value="3.90 A"/>
    <property type="chains" value="J=1-208"/>
</dbReference>
<dbReference type="PDB" id="7SYW">
    <property type="method" value="EM"/>
    <property type="resolution" value="3.70 A"/>
    <property type="chains" value="J=1-208"/>
</dbReference>
<dbReference type="PDB" id="7SYX">
    <property type="method" value="EM"/>
    <property type="resolution" value="3.70 A"/>
    <property type="chains" value="J=1-208"/>
</dbReference>
<dbReference type="PDB" id="7TOQ">
    <property type="method" value="EM"/>
    <property type="resolution" value="3.10 A"/>
    <property type="chains" value="AS08=2-207"/>
</dbReference>
<dbReference type="PDB" id="7TOR">
    <property type="method" value="EM"/>
    <property type="resolution" value="2.90 A"/>
    <property type="chains" value="AS08=2-207"/>
</dbReference>
<dbReference type="PDB" id="7UCJ">
    <property type="method" value="EM"/>
    <property type="resolution" value="3.10 A"/>
    <property type="chains" value="II=2-207"/>
</dbReference>
<dbReference type="PDB" id="7UCK">
    <property type="method" value="EM"/>
    <property type="resolution" value="2.80 A"/>
    <property type="chains" value="II=2-207"/>
</dbReference>
<dbReference type="PDB" id="8BHF">
    <property type="method" value="EM"/>
    <property type="resolution" value="3.10 A"/>
    <property type="chains" value="J3=2-207"/>
</dbReference>
<dbReference type="PDB" id="8BTK">
    <property type="method" value="EM"/>
    <property type="resolution" value="3.50 A"/>
    <property type="chains" value="Ah=1-208"/>
</dbReference>
<dbReference type="PDB" id="8P03">
    <property type="method" value="EM"/>
    <property type="resolution" value="3.04 A"/>
    <property type="chains" value="K=2-207"/>
</dbReference>
<dbReference type="PDB" id="8P09">
    <property type="method" value="EM"/>
    <property type="resolution" value="3.30 A"/>
    <property type="chains" value="K=2-207"/>
</dbReference>
<dbReference type="PDB" id="8P2K">
    <property type="method" value="EM"/>
    <property type="resolution" value="2.90 A"/>
    <property type="chains" value="Ah=1-208"/>
</dbReference>
<dbReference type="PDB" id="8SCB">
    <property type="method" value="EM"/>
    <property type="resolution" value="2.50 A"/>
    <property type="chains" value="II=1-208"/>
</dbReference>
<dbReference type="PDB" id="8VFT">
    <property type="method" value="EM"/>
    <property type="resolution" value="3.30 A"/>
    <property type="chains" value="II=1-208"/>
</dbReference>
<dbReference type="PDB" id="9BDL">
    <property type="method" value="EM"/>
    <property type="resolution" value="2.80 A"/>
    <property type="chains" value="AS08=2-207"/>
</dbReference>
<dbReference type="PDB" id="9BDN">
    <property type="method" value="EM"/>
    <property type="resolution" value="3.10 A"/>
    <property type="chains" value="AS08=2-207"/>
</dbReference>
<dbReference type="PDB" id="9BDP">
    <property type="method" value="EM"/>
    <property type="resolution" value="3.70 A"/>
    <property type="chains" value="AS08=2-207"/>
</dbReference>
<dbReference type="PDB" id="9C8K">
    <property type="method" value="EM"/>
    <property type="resolution" value="3.10 A"/>
    <property type="chains" value="I=1-208"/>
</dbReference>
<dbReference type="PDB" id="9F1B">
    <property type="method" value="EM"/>
    <property type="resolution" value="3.01 A"/>
    <property type="chains" value="Ah=1-208"/>
</dbReference>
<dbReference type="PDB" id="9F1C">
    <property type="method" value="EM"/>
    <property type="resolution" value="3.78 A"/>
    <property type="chains" value="Ah=1-208"/>
</dbReference>
<dbReference type="PDB" id="9F1D">
    <property type="method" value="EM"/>
    <property type="resolution" value="3.26 A"/>
    <property type="chains" value="Ah=1-208"/>
</dbReference>
<dbReference type="PDBsum" id="3JAG"/>
<dbReference type="PDBsum" id="3JAH"/>
<dbReference type="PDBsum" id="3JAI"/>
<dbReference type="PDBsum" id="4D5L"/>
<dbReference type="PDBsum" id="4D61"/>
<dbReference type="PDBsum" id="4KZX"/>
<dbReference type="PDBsum" id="4KZY"/>
<dbReference type="PDBsum" id="4KZZ"/>
<dbReference type="PDBsum" id="5K0Y"/>
<dbReference type="PDBsum" id="5LZS"/>
<dbReference type="PDBsum" id="5LZT"/>
<dbReference type="PDBsum" id="5LZU"/>
<dbReference type="PDBsum" id="5LZV"/>
<dbReference type="PDBsum" id="5LZW"/>
<dbReference type="PDBsum" id="5LZZ"/>
<dbReference type="PDBsum" id="6D90"/>
<dbReference type="PDBsum" id="6D9J"/>
<dbReference type="PDBsum" id="6P4G"/>
<dbReference type="PDBsum" id="6P4H"/>
<dbReference type="PDBsum" id="6R5Q"/>
<dbReference type="PDBsum" id="6R6G"/>
<dbReference type="PDBsum" id="6R6P"/>
<dbReference type="PDBsum" id="6R7Q"/>
<dbReference type="PDBsum" id="6SGC"/>
<dbReference type="PDBsum" id="6W2S"/>
<dbReference type="PDBsum" id="6W2T"/>
<dbReference type="PDBsum" id="6YAL"/>
<dbReference type="PDBsum" id="6YAM"/>
<dbReference type="PDBsum" id="6YAN"/>
<dbReference type="PDBsum" id="6ZVK"/>
<dbReference type="PDBsum" id="7A01"/>
<dbReference type="PDBsum" id="7JQB"/>
<dbReference type="PDBsum" id="7JQC"/>
<dbReference type="PDBsum" id="7MDZ"/>
<dbReference type="PDBsum" id="7NWG"/>
<dbReference type="PDBsum" id="7NWI"/>
<dbReference type="PDBsum" id="7O7Y"/>
<dbReference type="PDBsum" id="7O7Z"/>
<dbReference type="PDBsum" id="7O80"/>
<dbReference type="PDBsum" id="7O81"/>
<dbReference type="PDBsum" id="7OYD"/>
<dbReference type="PDBsum" id="7SYG"/>
<dbReference type="PDBsum" id="7SYH"/>
<dbReference type="PDBsum" id="7SYI"/>
<dbReference type="PDBsum" id="7SYJ"/>
<dbReference type="PDBsum" id="7SYK"/>
<dbReference type="PDBsum" id="7SYL"/>
<dbReference type="PDBsum" id="7SYM"/>
<dbReference type="PDBsum" id="7SYN"/>
<dbReference type="PDBsum" id="7SYO"/>
<dbReference type="PDBsum" id="7SYP"/>
<dbReference type="PDBsum" id="7SYQ"/>
<dbReference type="PDBsum" id="7SYR"/>
<dbReference type="PDBsum" id="7SYS"/>
<dbReference type="PDBsum" id="7SYT"/>
<dbReference type="PDBsum" id="7SYU"/>
<dbReference type="PDBsum" id="7SYV"/>
<dbReference type="PDBsum" id="7SYW"/>
<dbReference type="PDBsum" id="7SYX"/>
<dbReference type="PDBsum" id="7TOQ"/>
<dbReference type="PDBsum" id="7TOR"/>
<dbReference type="PDBsum" id="7UCJ"/>
<dbReference type="PDBsum" id="7UCK"/>
<dbReference type="PDBsum" id="8BHF"/>
<dbReference type="PDBsum" id="8BTK"/>
<dbReference type="PDBsum" id="8P03"/>
<dbReference type="PDBsum" id="8P09"/>
<dbReference type="PDBsum" id="8P2K"/>
<dbReference type="PDBsum" id="8SCB"/>
<dbReference type="PDBsum" id="8VFT"/>
<dbReference type="PDBsum" id="9BDL"/>
<dbReference type="PDBsum" id="9BDN"/>
<dbReference type="PDBsum" id="9BDP"/>
<dbReference type="PDBsum" id="9C8K"/>
<dbReference type="PDBsum" id="9F1B"/>
<dbReference type="PDBsum" id="9F1C"/>
<dbReference type="PDBsum" id="9F1D"/>
<dbReference type="EMDB" id="EMD-0099"/>
<dbReference type="EMDB" id="EMD-0100"/>
<dbReference type="EMDB" id="EMD-0192"/>
<dbReference type="EMDB" id="EMD-0194"/>
<dbReference type="EMDB" id="EMD-0195"/>
<dbReference type="EMDB" id="EMD-0197"/>
<dbReference type="EMDB" id="EMD-10181"/>
<dbReference type="EMDB" id="EMD-10760"/>
<dbReference type="EMDB" id="EMD-10761"/>
<dbReference type="EMDB" id="EMD-10762"/>
<dbReference type="EMDB" id="EMD-11459"/>
<dbReference type="EMDB" id="EMD-11590"/>
<dbReference type="EMDB" id="EMD-12631"/>
<dbReference type="EMDB" id="EMD-12633"/>
<dbReference type="EMDB" id="EMD-12756"/>
<dbReference type="EMDB" id="EMD-12757"/>
<dbReference type="EMDB" id="EMD-12758"/>
<dbReference type="EMDB" id="EMD-12759"/>
<dbReference type="EMDB" id="EMD-13114"/>
<dbReference type="EMDB" id="EMD-16052"/>
<dbReference type="EMDB" id="EMD-16232"/>
<dbReference type="EMDB" id="EMD-17329"/>
<dbReference type="EMDB" id="EMD-17330"/>
<dbReference type="EMDB" id="EMD-17367"/>
<dbReference type="EMDB" id="EMD-20248"/>
<dbReference type="EMDB" id="EMD-20249"/>
<dbReference type="EMDB" id="EMD-20255"/>
<dbReference type="EMDB" id="EMD-20256"/>
<dbReference type="EMDB" id="EMD-20257"/>
<dbReference type="EMDB" id="EMD-20258"/>
<dbReference type="EMDB" id="EMD-21529"/>
<dbReference type="EMDB" id="EMD-21530"/>
<dbReference type="EMDB" id="EMD-22432"/>
<dbReference type="EMDB" id="EMD-22433"/>
<dbReference type="EMDB" id="EMD-23785"/>
<dbReference type="EMDB" id="EMD-25527"/>
<dbReference type="EMDB" id="EMD-25528"/>
<dbReference type="EMDB" id="EMD-25529"/>
<dbReference type="EMDB" id="EMD-25530"/>
<dbReference type="EMDB" id="EMD-25531"/>
<dbReference type="EMDB" id="EMD-25532"/>
<dbReference type="EMDB" id="EMD-25533"/>
<dbReference type="EMDB" id="EMD-25534"/>
<dbReference type="EMDB" id="EMD-25535"/>
<dbReference type="EMDB" id="EMD-25536"/>
<dbReference type="EMDB" id="EMD-25537"/>
<dbReference type="EMDB" id="EMD-25538"/>
<dbReference type="EMDB" id="EMD-25539"/>
<dbReference type="EMDB" id="EMD-25540"/>
<dbReference type="EMDB" id="EMD-25541"/>
<dbReference type="EMDB" id="EMD-25542"/>
<dbReference type="EMDB" id="EMD-25543"/>
<dbReference type="EMDB" id="EMD-25544"/>
<dbReference type="EMDB" id="EMD-26035"/>
<dbReference type="EMDB" id="EMD-26036"/>
<dbReference type="EMDB" id="EMD-26444"/>
<dbReference type="EMDB" id="EMD-26445"/>
<dbReference type="EMDB" id="EMD-40344"/>
<dbReference type="EMDB" id="EMD-4130"/>
<dbReference type="EMDB" id="EMD-4131"/>
<dbReference type="EMDB" id="EMD-4132"/>
<dbReference type="EMDB" id="EMD-4133"/>
<dbReference type="EMDB" id="EMD-4134"/>
<dbReference type="EMDB" id="EMD-4135"/>
<dbReference type="EMDB" id="EMD-4136"/>
<dbReference type="EMDB" id="EMD-4137"/>
<dbReference type="EMDB" id="EMD-43189"/>
<dbReference type="EMDB" id="EMD-44461"/>
<dbReference type="EMDB" id="EMD-44463"/>
<dbReference type="EMDB" id="EMD-44464"/>
<dbReference type="EMDB" id="EMD-45307"/>
<dbReference type="EMDB" id="EMD-4729"/>
<dbReference type="EMDB" id="EMD-4735"/>
<dbReference type="EMDB" id="EMD-4737"/>
<dbReference type="EMDB" id="EMD-4745"/>
<dbReference type="EMDB" id="EMD-50124"/>
<dbReference type="EMDB" id="EMD-50125"/>
<dbReference type="EMDB" id="EMD-50126"/>
<dbReference type="EMDB" id="EMD-7834"/>
<dbReference type="EMDB" id="EMD-7836"/>
<dbReference type="EMDB" id="EMD-8190"/>
<dbReference type="SMR" id="G1TJW1"/>
<dbReference type="FunCoup" id="G1TJW1">
    <property type="interactions" value="1580"/>
</dbReference>
<dbReference type="IntAct" id="G1TJW1">
    <property type="interactions" value="1"/>
</dbReference>
<dbReference type="STRING" id="9986.ENSOCUP00000017241"/>
<dbReference type="PaxDb" id="9986-ENSOCUP00000017241"/>
<dbReference type="Ensembl" id="ENSOCUT00000027418.1">
    <property type="protein sequence ID" value="ENSOCUP00000017241.1"/>
    <property type="gene ID" value="ENSOCUG00000017511.2"/>
</dbReference>
<dbReference type="KEGG" id="ocu:100352057"/>
<dbReference type="eggNOG" id="KOG3283">
    <property type="taxonomic scope" value="Eukaryota"/>
</dbReference>
<dbReference type="GeneTree" id="ENSGT00390000012433"/>
<dbReference type="HOGENOM" id="CLU_080597_1_1_1"/>
<dbReference type="InParanoid" id="G1TJW1"/>
<dbReference type="OMA" id="QRPHYRK"/>
<dbReference type="OrthoDB" id="1703270at2759"/>
<dbReference type="TreeFam" id="TF300041"/>
<dbReference type="EvolutionaryTrace" id="G1TJW1"/>
<dbReference type="Proteomes" id="UP000001811">
    <property type="component" value="Chromosome 1"/>
</dbReference>
<dbReference type="Bgee" id="ENSOCUG00000017511">
    <property type="expression patterns" value="Expressed in autopod skin and 16 other cell types or tissues"/>
</dbReference>
<dbReference type="GO" id="GO:0022626">
    <property type="term" value="C:cytosolic ribosome"/>
    <property type="evidence" value="ECO:0000314"/>
    <property type="project" value="UniProtKB"/>
</dbReference>
<dbReference type="GO" id="GO:0016020">
    <property type="term" value="C:membrane"/>
    <property type="evidence" value="ECO:0007669"/>
    <property type="project" value="UniProtKB-SubCell"/>
</dbReference>
<dbReference type="GO" id="GO:0005730">
    <property type="term" value="C:nucleolus"/>
    <property type="evidence" value="ECO:0007669"/>
    <property type="project" value="UniProtKB-SubCell"/>
</dbReference>
<dbReference type="GO" id="GO:1990904">
    <property type="term" value="C:ribonucleoprotein complex"/>
    <property type="evidence" value="ECO:0007669"/>
    <property type="project" value="UniProtKB-KW"/>
</dbReference>
<dbReference type="GO" id="GO:0003735">
    <property type="term" value="F:structural constituent of ribosome"/>
    <property type="evidence" value="ECO:0000314"/>
    <property type="project" value="UniProtKB"/>
</dbReference>
<dbReference type="GO" id="GO:0006412">
    <property type="term" value="P:translation"/>
    <property type="evidence" value="ECO:0007669"/>
    <property type="project" value="InterPro"/>
</dbReference>
<dbReference type="CDD" id="cd11380">
    <property type="entry name" value="Ribosomal_S8e_like"/>
    <property type="match status" value="1"/>
</dbReference>
<dbReference type="FunFam" id="1.10.168.20:FF:000001">
    <property type="entry name" value="40S ribosomal protein S8"/>
    <property type="match status" value="1"/>
</dbReference>
<dbReference type="FunFam" id="3.10.290.70:FF:000004">
    <property type="entry name" value="40S ribosomal protein S8"/>
    <property type="match status" value="1"/>
</dbReference>
<dbReference type="FunFam" id="3.10.290.70:FF:000005">
    <property type="entry name" value="40S ribosomal protein S8"/>
    <property type="match status" value="1"/>
</dbReference>
<dbReference type="Gene3D" id="3.10.290.70">
    <property type="match status" value="1"/>
</dbReference>
<dbReference type="Gene3D" id="1.10.168.20">
    <property type="entry name" value="Ribosomal protein S8e, subdomain"/>
    <property type="match status" value="1"/>
</dbReference>
<dbReference type="InterPro" id="IPR001047">
    <property type="entry name" value="Ribosomal_eS8"/>
</dbReference>
<dbReference type="InterPro" id="IPR018283">
    <property type="entry name" value="Ribosomal_eS8_CS"/>
</dbReference>
<dbReference type="InterPro" id="IPR042563">
    <property type="entry name" value="Ribosomal_protein_eS8_euk"/>
</dbReference>
<dbReference type="InterPro" id="IPR022309">
    <property type="entry name" value="Ribosomal_Se8/biogenesis_NSA2"/>
</dbReference>
<dbReference type="NCBIfam" id="TIGR00307">
    <property type="entry name" value="eS8"/>
    <property type="match status" value="1"/>
</dbReference>
<dbReference type="PANTHER" id="PTHR10394">
    <property type="entry name" value="40S RIBOSOMAL PROTEIN S8"/>
    <property type="match status" value="1"/>
</dbReference>
<dbReference type="Pfam" id="PF01201">
    <property type="entry name" value="Ribosomal_S8e"/>
    <property type="match status" value="1"/>
</dbReference>
<dbReference type="PROSITE" id="PS01193">
    <property type="entry name" value="RIBOSOMAL_S8E"/>
    <property type="match status" value="1"/>
</dbReference>
<organism>
    <name type="scientific">Oryctolagus cuniculus</name>
    <name type="common">Rabbit</name>
    <dbReference type="NCBI Taxonomy" id="9986"/>
    <lineage>
        <taxon>Eukaryota</taxon>
        <taxon>Metazoa</taxon>
        <taxon>Chordata</taxon>
        <taxon>Craniata</taxon>
        <taxon>Vertebrata</taxon>
        <taxon>Euteleostomi</taxon>
        <taxon>Mammalia</taxon>
        <taxon>Eutheria</taxon>
        <taxon>Euarchontoglires</taxon>
        <taxon>Glires</taxon>
        <taxon>Lagomorpha</taxon>
        <taxon>Leporidae</taxon>
        <taxon>Oryctolagus</taxon>
    </lineage>
</organism>
<evidence type="ECO:0000250" key="1">
    <source>
        <dbReference type="UniProtKB" id="P62241"/>
    </source>
</evidence>
<evidence type="ECO:0000250" key="2">
    <source>
        <dbReference type="UniProtKB" id="P62242"/>
    </source>
</evidence>
<evidence type="ECO:0000256" key="3">
    <source>
        <dbReference type="SAM" id="MobiDB-lite"/>
    </source>
</evidence>
<evidence type="ECO:0000269" key="4">
    <source>
    </source>
</evidence>
<evidence type="ECO:0000269" key="5">
    <source>
    </source>
</evidence>
<evidence type="ECO:0000269" key="6">
    <source>
    </source>
</evidence>
<evidence type="ECO:0000269" key="7">
    <source>
    </source>
</evidence>
<evidence type="ECO:0000269" key="8">
    <source>
    </source>
</evidence>
<evidence type="ECO:0000269" key="9">
    <source>
    </source>
</evidence>
<evidence type="ECO:0000269" key="10">
    <source>
    </source>
</evidence>
<evidence type="ECO:0000269" key="11">
    <source>
    </source>
</evidence>
<evidence type="ECO:0000269" key="12">
    <source>
    </source>
</evidence>
<evidence type="ECO:0000269" key="13">
    <source>
    </source>
</evidence>
<evidence type="ECO:0000269" key="14">
    <source>
    </source>
</evidence>
<evidence type="ECO:0000269" key="15">
    <source>
    </source>
</evidence>
<evidence type="ECO:0000269" key="16">
    <source>
    </source>
</evidence>
<evidence type="ECO:0000305" key="17"/>
<evidence type="ECO:0007744" key="18">
    <source>
        <dbReference type="PDB" id="3JAG"/>
    </source>
</evidence>
<evidence type="ECO:0007744" key="19">
    <source>
        <dbReference type="PDB" id="3JAH"/>
    </source>
</evidence>
<evidence type="ECO:0007744" key="20">
    <source>
        <dbReference type="PDB" id="4D5L"/>
    </source>
</evidence>
<evidence type="ECO:0007744" key="21">
    <source>
        <dbReference type="PDB" id="4D61"/>
    </source>
</evidence>
<evidence type="ECO:0007744" key="22">
    <source>
        <dbReference type="PDB" id="4KZX"/>
    </source>
</evidence>
<evidence type="ECO:0007744" key="23">
    <source>
        <dbReference type="PDB" id="4KZY"/>
    </source>
</evidence>
<evidence type="ECO:0007744" key="24">
    <source>
        <dbReference type="PDB" id="5LZS"/>
    </source>
</evidence>
<evidence type="ECO:0007744" key="25">
    <source>
        <dbReference type="PDB" id="5LZT"/>
    </source>
</evidence>
<evidence type="ECO:0007744" key="26">
    <source>
        <dbReference type="PDB" id="6D90"/>
    </source>
</evidence>
<evidence type="ECO:0007744" key="27">
    <source>
        <dbReference type="PDB" id="6D9J"/>
    </source>
</evidence>
<evidence type="ECO:0007744" key="28">
    <source>
        <dbReference type="PDB" id="6P4G"/>
    </source>
</evidence>
<evidence type="ECO:0007744" key="29">
    <source>
        <dbReference type="PDB" id="6P4H"/>
    </source>
</evidence>
<evidence type="ECO:0007744" key="30">
    <source>
        <dbReference type="PDB" id="6R5Q"/>
    </source>
</evidence>
<evidence type="ECO:0007744" key="31">
    <source>
        <dbReference type="PDB" id="6R6G"/>
    </source>
</evidence>
<evidence type="ECO:0007744" key="32">
    <source>
        <dbReference type="PDB" id="6SGC"/>
    </source>
</evidence>
<evidence type="ECO:0007744" key="33">
    <source>
        <dbReference type="PDB" id="6W2S"/>
    </source>
</evidence>
<evidence type="ECO:0007744" key="34">
    <source>
        <dbReference type="PDB" id="6W2T"/>
    </source>
</evidence>
<evidence type="ECO:0007744" key="35">
    <source>
        <dbReference type="PDB" id="6ZVK"/>
    </source>
</evidence>
<evidence type="ECO:0007744" key="36">
    <source>
        <dbReference type="PDB" id="7A01"/>
    </source>
</evidence>
<evidence type="ECO:0007744" key="37">
    <source>
        <dbReference type="PDB" id="7OYD"/>
    </source>
</evidence>
<evidence type="ECO:0007744" key="38">
    <source>
        <dbReference type="PDB" id="7SYI"/>
    </source>
</evidence>
<evidence type="ECO:0007744" key="39">
    <source>
        <dbReference type="PDB" id="7SYJ"/>
    </source>
</evidence>
<evidence type="ECO:0007744" key="40">
    <source>
        <dbReference type="PDB" id="7UCJ"/>
    </source>
</evidence>
<evidence type="ECO:0007744" key="41">
    <source>
        <dbReference type="PDB" id="7UCK"/>
    </source>
</evidence>
<evidence type="ECO:0007829" key="42">
    <source>
        <dbReference type="PDB" id="6P4G"/>
    </source>
</evidence>
<evidence type="ECO:0007829" key="43">
    <source>
        <dbReference type="PDB" id="6P4H"/>
    </source>
</evidence>
<evidence type="ECO:0007829" key="44">
    <source>
        <dbReference type="PDB" id="6YAL"/>
    </source>
</evidence>
<evidence type="ECO:0007829" key="45">
    <source>
        <dbReference type="PDB" id="7JQB"/>
    </source>
</evidence>
<evidence type="ECO:0007829" key="46">
    <source>
        <dbReference type="PDB" id="8P03"/>
    </source>
</evidence>
<gene>
    <name type="primary">RPS8</name>
</gene>
<sequence>MGISRDNWHKRRKTGGKRKPYHKKRKYELGRPAANTKIGPRRIHTVGVRGGNKKYRALRLDVGNFSWGSECCTRKTRIIDVVYNASNNELVRTKTLVKNCIVLIDSTPYRQWYESHYALPLGRKKGAKLTPEEEEILNKKRSKKIQKKYDERKKNAKISSLLEEQFQQGKLLACIASRPGQCGRADGYVLEGKELEFYLRKIKARKGK</sequence>
<name>RS8_RABIT</name>
<keyword id="KW-0002">3D-structure</keyword>
<keyword id="KW-0007">Acetylation</keyword>
<keyword id="KW-0963">Cytoplasm</keyword>
<keyword id="KW-1017">Isopeptide bond</keyword>
<keyword id="KW-0449">Lipoprotein</keyword>
<keyword id="KW-0472">Membrane</keyword>
<keyword id="KW-0519">Myristate</keyword>
<keyword id="KW-0539">Nucleus</keyword>
<keyword id="KW-0597">Phosphoprotein</keyword>
<keyword id="KW-1185">Reference proteome</keyword>
<keyword id="KW-0687">Ribonucleoprotein</keyword>
<keyword id="KW-0689">Ribosomal protein</keyword>
<keyword id="KW-0832">Ubl conjugation</keyword>
<comment type="function">
    <text evidence="4 5 6 7">Component of the small ribosomal subunit (PubMed:23873042, PubMed:25601755, PubMed:26245381, PubMed:27863242). The ribosome is a large ribonucleoprotein complex responsible for the synthesis of proteins in the cell (PubMed:23873042, PubMed:25601755, PubMed:26245381, PubMed:27863242). Part of the small subunit (SSU) processome, first precursor of the small eukaryotic ribosomal subunit (PubMed:23873042, PubMed:25601755, PubMed:26245381, PubMed:27863242). During the assembly of the SSU processome in the nucleolus, many ribosome biogenesis factors, an RNA chaperone and ribosomal proteins associate with the nascent pre-rRNA and work in concert to generate RNA folding, modifications, rearrangements and cleavage as well as targeted degradation of pre-ribosomal RNA by the RNA exosome (PubMed:23873042, PubMed:25601755, PubMed:26245381, PubMed:27863242).</text>
</comment>
<comment type="subunit">
    <text evidence="4 5 6 7 8 9 10 11 12 13 14 15 16">Component of the small ribosomal subunit (PubMed:23873042, PubMed:25601755, PubMed:26245381, PubMed:27863242, PubMed:29856316, PubMed:31246176, PubMed:31609474, PubMed:31768042, PubMed:32286223, PubMed:33296660, PubMed:35679869, PubMed:35822879, PubMed:36653451). Identified in a IGF2BP1-dependent mRNP granule complex containing untranslated mRNAs (PubMed:23873042, PubMed:25601755, PubMed:26245381, PubMed:27863242, PubMed:29856316, PubMed:31246176, PubMed:31609474, PubMed:31768042, PubMed:32286223, PubMed:33296660, PubMed:35679869, PubMed:35822879, PubMed:36653451). Part of the small subunit (SSU) processome, composed of more than 70 proteins and the RNA chaperone small nucleolar RNA (snoRNA) U3 (PubMed:23873042, PubMed:25601755, PubMed:26245381, PubMed:27863242, PubMed:29856316, PubMed:31246176, PubMed:31609474, PubMed:31768042, PubMed:32286223, PubMed:33296660, PubMed:35679869, PubMed:35822879, PubMed:36653451).</text>
</comment>
<comment type="subcellular location">
    <subcellularLocation>
        <location evidence="4 5 6 7 8 9 10 11 12 13 14 15 16">Cytoplasm</location>
    </subcellularLocation>
    <subcellularLocation>
        <location evidence="1">Membrane</location>
        <topology evidence="1">Lipid-anchor</topology>
    </subcellularLocation>
    <subcellularLocation>
        <location evidence="1">Nucleus</location>
        <location evidence="1">Nucleolus</location>
    </subcellularLocation>
    <text evidence="1">Localized in cytoplasmic mRNP granules containing untranslated mRNAs.</text>
</comment>
<comment type="similarity">
    <text evidence="17">Belongs to the eukaryotic ribosomal protein eS8 family.</text>
</comment>
<proteinExistence type="evidence at protein level"/>
<protein>
    <recommendedName>
        <fullName>Small ribosomal subunit protein eS8</fullName>
    </recommendedName>
    <alternativeName>
        <fullName>40S ribosomal protein S8</fullName>
    </alternativeName>
</protein>
<accession>G1TJW1</accession>
<feature type="initiator methionine" description="Removed" evidence="1">
    <location>
        <position position="1"/>
    </location>
</feature>
<feature type="chain" id="PRO_0000460058" description="Small ribosomal subunit protein eS8">
    <location>
        <begin position="2"/>
        <end position="208"/>
    </location>
</feature>
<feature type="region of interest" description="Disordered" evidence="3">
    <location>
        <begin position="1"/>
        <end position="27"/>
    </location>
</feature>
<feature type="compositionally biased region" description="Basic residues" evidence="3">
    <location>
        <begin position="8"/>
        <end position="26"/>
    </location>
</feature>
<feature type="modified residue" description="N6-acetyllysine" evidence="2">
    <location>
        <position position="37"/>
    </location>
</feature>
<feature type="modified residue" description="N6-acetyllysine" evidence="2">
    <location>
        <position position="128"/>
    </location>
</feature>
<feature type="modified residue" description="Phosphothreonine" evidence="1">
    <location>
        <position position="130"/>
    </location>
</feature>
<feature type="modified residue" description="Phosphoserine" evidence="1">
    <location>
        <position position="160"/>
    </location>
</feature>
<feature type="lipid moiety-binding region" description="N-myristoyl glycine" evidence="1">
    <location>
        <position position="2"/>
    </location>
</feature>
<feature type="cross-link" description="Glycyl lysine isopeptide (Lys-Gly) (interchain with G-Cter in SUMO2)" evidence="1">
    <location>
        <position position="170"/>
    </location>
</feature>
<feature type="cross-link" description="Glycyl lysine isopeptide (Lys-Gly) (interchain with G-Cter in SUMO2)" evidence="1">
    <location>
        <position position="193"/>
    </location>
</feature>
<feature type="strand" evidence="44">
    <location>
        <begin position="7"/>
        <end position="10"/>
    </location>
</feature>
<feature type="strand" evidence="45">
    <location>
        <begin position="13"/>
        <end position="15"/>
    </location>
</feature>
<feature type="helix" evidence="45">
    <location>
        <begin position="26"/>
        <end position="28"/>
    </location>
</feature>
<feature type="strand" evidence="45">
    <location>
        <begin position="36"/>
        <end position="40"/>
    </location>
</feature>
<feature type="strand" evidence="45">
    <location>
        <begin position="42"/>
        <end position="47"/>
    </location>
</feature>
<feature type="turn" evidence="42">
    <location>
        <begin position="49"/>
        <end position="51"/>
    </location>
</feature>
<feature type="strand" evidence="45">
    <location>
        <begin position="53"/>
        <end position="60"/>
    </location>
</feature>
<feature type="strand" evidence="45">
    <location>
        <begin position="62"/>
        <end position="67"/>
    </location>
</feature>
<feature type="turn" evidence="45">
    <location>
        <begin position="68"/>
        <end position="71"/>
    </location>
</feature>
<feature type="strand" evidence="45">
    <location>
        <begin position="72"/>
        <end position="86"/>
    </location>
</feature>
<feature type="helix" evidence="45">
    <location>
        <begin position="89"/>
        <end position="92"/>
    </location>
</feature>
<feature type="strand" evidence="45">
    <location>
        <begin position="100"/>
        <end position="106"/>
    </location>
</feature>
<feature type="helix" evidence="45">
    <location>
        <begin position="107"/>
        <end position="116"/>
    </location>
</feature>
<feature type="helix" evidence="46">
    <location>
        <begin position="127"/>
        <end position="129"/>
    </location>
</feature>
<feature type="helix" evidence="45">
    <location>
        <begin position="133"/>
        <end position="136"/>
    </location>
</feature>
<feature type="strand" evidence="43">
    <location>
        <begin position="137"/>
        <end position="139"/>
    </location>
</feature>
<feature type="helix" evidence="45">
    <location>
        <begin position="144"/>
        <end position="151"/>
    </location>
</feature>
<feature type="turn" evidence="45">
    <location>
        <begin position="152"/>
        <end position="155"/>
    </location>
</feature>
<feature type="helix" evidence="45">
    <location>
        <begin position="160"/>
        <end position="168"/>
    </location>
</feature>
<feature type="strand" evidence="45">
    <location>
        <begin position="170"/>
        <end position="175"/>
    </location>
</feature>
<feature type="helix" evidence="45">
    <location>
        <begin position="179"/>
        <end position="182"/>
    </location>
</feature>
<feature type="strand" evidence="45">
    <location>
        <begin position="187"/>
        <end position="189"/>
    </location>
</feature>
<feature type="helix" evidence="45">
    <location>
        <begin position="192"/>
        <end position="205"/>
    </location>
</feature>